<accession>Q9BX67</accession>
<accession>B3KWG9</accession>
<accession>Q8WWL8</accession>
<accession>Q96FL1</accession>
<gene>
    <name type="primary">JAM3</name>
    <name type="ORF">UNQ859/PRO1868</name>
</gene>
<organism>
    <name type="scientific">Homo sapiens</name>
    <name type="common">Human</name>
    <dbReference type="NCBI Taxonomy" id="9606"/>
    <lineage>
        <taxon>Eukaryota</taxon>
        <taxon>Metazoa</taxon>
        <taxon>Chordata</taxon>
        <taxon>Craniata</taxon>
        <taxon>Vertebrata</taxon>
        <taxon>Euteleostomi</taxon>
        <taxon>Mammalia</taxon>
        <taxon>Eutheria</taxon>
        <taxon>Euarchontoglires</taxon>
        <taxon>Primates</taxon>
        <taxon>Haplorrhini</taxon>
        <taxon>Catarrhini</taxon>
        <taxon>Hominidae</taxon>
        <taxon>Homo</taxon>
    </lineage>
</organism>
<sequence>MALRRPPRLRLCARLPDFFLLLLFRGCLIGAVNLKSSNRTPVVQEFESVELSCIITDSQTSDPRIEWKKIQDEQTTYVFFDNKIQGDLAGRAEILGKTSLKIWNVTRRDSALYRCEVVARNDRKEIDEIVIELTVQVKPVTPVCRVPKAVPVGKMATLHCQESEGHPRPHYSWYRNDVPLPTDSRANPRFRNSSFHLNSETGTLVFTAVHKDDSGQYYCIASNDAGSARCEEQEMEVYDLNIGGIIGGVLVVLAVLALITLGICCAYRRGYFINNKQDGESYKNPGKPDGVNYIRTDEEGDFRHKSSFVI</sequence>
<feature type="signal peptide" evidence="10">
    <location>
        <begin position="1"/>
        <end position="31"/>
    </location>
</feature>
<feature type="chain" id="PRO_0000015071" description="Junctional adhesion molecule C">
    <location>
        <begin position="32"/>
        <end position="310"/>
    </location>
</feature>
<feature type="chain" id="PRO_0000445336" description="Soluble form of JAM-C">
    <location>
        <begin position="32"/>
        <end status="unknown"/>
    </location>
</feature>
<feature type="topological domain" description="Extracellular" evidence="3">
    <location>
        <begin position="32"/>
        <end position="241"/>
    </location>
</feature>
<feature type="transmembrane region" description="Helical" evidence="3">
    <location>
        <begin position="242"/>
        <end position="262"/>
    </location>
</feature>
<feature type="topological domain" description="Cytoplasmic" evidence="3">
    <location>
        <begin position="263"/>
        <end position="310"/>
    </location>
</feature>
<feature type="domain" description="Ig-like V-type">
    <location>
        <begin position="35"/>
        <end position="127"/>
    </location>
</feature>
<feature type="domain" description="Ig-like C2-type">
    <location>
        <begin position="139"/>
        <end position="236"/>
    </location>
</feature>
<feature type="lipid moiety-binding region" description="S-palmitoyl cysteine" evidence="18">
    <location>
        <position position="264"/>
    </location>
</feature>
<feature type="lipid moiety-binding region" description="S-palmitoyl cysteine" evidence="18">
    <location>
        <position position="265"/>
    </location>
</feature>
<feature type="glycosylation site" description="N-linked (GlcNAc...) asparagine" evidence="3">
    <location>
        <position position="104"/>
    </location>
</feature>
<feature type="glycosylation site" description="N-linked (GlcNAc...) asparagine" evidence="13">
    <location>
        <position position="192"/>
    </location>
</feature>
<feature type="disulfide bond" evidence="4">
    <location>
        <begin position="53"/>
        <end position="115"/>
    </location>
</feature>
<feature type="disulfide bond" evidence="4">
    <location>
        <begin position="160"/>
        <end position="219"/>
    </location>
</feature>
<feature type="splice variant" id="VSP_042561" description="In isoform 2." evidence="19">
    <location>
        <begin position="85"/>
        <end position="135"/>
    </location>
</feature>
<feature type="sequence variant" id="VAR_069529" description="In HDBSCC; normal location at the cell membrane; dbSNP:rs397515439." evidence="16">
    <original>E</original>
    <variation>K</variation>
    <location>
        <position position="116"/>
    </location>
</feature>
<feature type="sequence variant" id="VAR_069530" description="In HDBSCC; the mutant is retained in the endoplasmic reticulum; dbSNP:rs397515438." evidence="16">
    <original>C</original>
    <variation>Y</variation>
    <location>
        <position position="219"/>
    </location>
</feature>
<feature type="mutagenesis site" description="Decreased palmitoylation. Abolishes palmitoylation; when associated with S-265." evidence="18">
    <original>C</original>
    <variation>S</variation>
    <location>
        <position position="264"/>
    </location>
</feature>
<feature type="mutagenesis site" description="Decreased palmitoylation. Abolishes palmitoylation; when associated with S-264." evidence="18">
    <original>C</original>
    <variation>S</variation>
    <location>
        <position position="265"/>
    </location>
</feature>
<feature type="sequence conflict" description="In Ref. 9; AAH10690." evidence="21" ref="9">
    <original>Q</original>
    <variation>R</variation>
    <location>
        <position position="136"/>
    </location>
</feature>
<proteinExistence type="evidence at protein level"/>
<dbReference type="EMBL" id="AF356518">
    <property type="protein sequence ID" value="AAK27221.1"/>
    <property type="molecule type" value="mRNA"/>
</dbReference>
<dbReference type="EMBL" id="AJ344431">
    <property type="protein sequence ID" value="CAC69845.1"/>
    <property type="molecule type" value="mRNA"/>
</dbReference>
<dbReference type="EMBL" id="AF448478">
    <property type="protein sequence ID" value="AAM20925.1"/>
    <property type="molecule type" value="mRNA"/>
</dbReference>
<dbReference type="EMBL" id="AJ416101">
    <property type="protein sequence ID" value="CAC94776.1"/>
    <property type="status" value="ALT_INIT"/>
    <property type="molecule type" value="mRNA"/>
</dbReference>
<dbReference type="EMBL" id="AK074769">
    <property type="protein sequence ID" value="BAC11195.1"/>
    <property type="molecule type" value="mRNA"/>
</dbReference>
<dbReference type="EMBL" id="AK075309">
    <property type="protein sequence ID" value="BAC11538.1"/>
    <property type="molecule type" value="mRNA"/>
</dbReference>
<dbReference type="EMBL" id="AK125071">
    <property type="protein sequence ID" value="BAG54131.1"/>
    <property type="molecule type" value="mRNA"/>
</dbReference>
<dbReference type="EMBL" id="AY358335">
    <property type="protein sequence ID" value="AAQ88701.1"/>
    <property type="molecule type" value="mRNA"/>
</dbReference>
<dbReference type="EMBL" id="AP000911">
    <property type="status" value="NOT_ANNOTATED_CDS"/>
    <property type="molecule type" value="Genomic_DNA"/>
</dbReference>
<dbReference type="EMBL" id="AP001775">
    <property type="status" value="NOT_ANNOTATED_CDS"/>
    <property type="molecule type" value="Genomic_DNA"/>
</dbReference>
<dbReference type="EMBL" id="CH471065">
    <property type="protein sequence ID" value="EAW67820.1"/>
    <property type="molecule type" value="Genomic_DNA"/>
</dbReference>
<dbReference type="EMBL" id="BC010690">
    <property type="protein sequence ID" value="AAH10690.1"/>
    <property type="molecule type" value="mRNA"/>
</dbReference>
<dbReference type="EMBL" id="BC012147">
    <property type="protein sequence ID" value="AAH12147.1"/>
    <property type="molecule type" value="mRNA"/>
</dbReference>
<dbReference type="CCDS" id="CCDS55799.1">
    <molecule id="Q9BX67-2"/>
</dbReference>
<dbReference type="CCDS" id="CCDS8494.2">
    <molecule id="Q9BX67-1"/>
</dbReference>
<dbReference type="RefSeq" id="NP_001192258.1">
    <molecule id="Q9BX67-2"/>
    <property type="nucleotide sequence ID" value="NM_001205329.2"/>
</dbReference>
<dbReference type="RefSeq" id="NP_116190.3">
    <molecule id="Q9BX67-1"/>
    <property type="nucleotide sequence ID" value="NM_032801.4"/>
</dbReference>
<dbReference type="SMR" id="Q9BX67"/>
<dbReference type="BioGRID" id="123734">
    <property type="interactions" value="36"/>
</dbReference>
<dbReference type="FunCoup" id="Q9BX67">
    <property type="interactions" value="591"/>
</dbReference>
<dbReference type="IntAct" id="Q9BX67">
    <property type="interactions" value="14"/>
</dbReference>
<dbReference type="MINT" id="Q9BX67"/>
<dbReference type="STRING" id="9606.ENSP00000299106"/>
<dbReference type="GlyConnect" id="672">
    <property type="glycosylation" value="2 N-Linked glycans (1 site)"/>
</dbReference>
<dbReference type="GlyCosmos" id="Q9BX67">
    <property type="glycosylation" value="2 sites, 4 glycans"/>
</dbReference>
<dbReference type="GlyGen" id="Q9BX67">
    <property type="glycosylation" value="2 sites, 7 N-linked glycans (2 sites)"/>
</dbReference>
<dbReference type="iPTMnet" id="Q9BX67"/>
<dbReference type="PhosphoSitePlus" id="Q9BX67"/>
<dbReference type="SwissPalm" id="Q9BX67"/>
<dbReference type="BioMuta" id="JAM3"/>
<dbReference type="DMDM" id="51701611"/>
<dbReference type="jPOST" id="Q9BX67"/>
<dbReference type="MassIVE" id="Q9BX67"/>
<dbReference type="PaxDb" id="9606-ENSP00000299106"/>
<dbReference type="PeptideAtlas" id="Q9BX67"/>
<dbReference type="ProteomicsDB" id="79366">
    <molecule id="Q9BX67-1"/>
</dbReference>
<dbReference type="ProteomicsDB" id="79367">
    <molecule id="Q9BX67-2"/>
</dbReference>
<dbReference type="Pumba" id="Q9BX67"/>
<dbReference type="ABCD" id="Q9BX67">
    <property type="antibodies" value="4 sequenced antibodies"/>
</dbReference>
<dbReference type="Antibodypedia" id="1117">
    <property type="antibodies" value="435 antibodies from 35 providers"/>
</dbReference>
<dbReference type="DNASU" id="83700"/>
<dbReference type="Ensembl" id="ENST00000299106.9">
    <molecule id="Q9BX67-1"/>
    <property type="protein sequence ID" value="ENSP00000299106.4"/>
    <property type="gene ID" value="ENSG00000166086.13"/>
</dbReference>
<dbReference type="Ensembl" id="ENST00000441717.3">
    <molecule id="Q9BX67-2"/>
    <property type="protein sequence ID" value="ENSP00000395742.3"/>
    <property type="gene ID" value="ENSG00000166086.13"/>
</dbReference>
<dbReference type="GeneID" id="83700"/>
<dbReference type="KEGG" id="hsa:83700"/>
<dbReference type="MANE-Select" id="ENST00000299106.9">
    <property type="protein sequence ID" value="ENSP00000299106.4"/>
    <property type="RefSeq nucleotide sequence ID" value="NM_032801.5"/>
    <property type="RefSeq protein sequence ID" value="NP_116190.3"/>
</dbReference>
<dbReference type="UCSC" id="uc001qhb.4">
    <molecule id="Q9BX67-1"/>
    <property type="organism name" value="human"/>
</dbReference>
<dbReference type="AGR" id="HGNC:15532"/>
<dbReference type="CTD" id="83700"/>
<dbReference type="DisGeNET" id="83700"/>
<dbReference type="GeneCards" id="JAM3"/>
<dbReference type="HGNC" id="HGNC:15532">
    <property type="gene designation" value="JAM3"/>
</dbReference>
<dbReference type="HPA" id="ENSG00000166086">
    <property type="expression patterns" value="Low tissue specificity"/>
</dbReference>
<dbReference type="MalaCards" id="JAM3"/>
<dbReference type="MIM" id="606871">
    <property type="type" value="gene"/>
</dbReference>
<dbReference type="MIM" id="613730">
    <property type="type" value="phenotype"/>
</dbReference>
<dbReference type="neXtProt" id="NX_Q9BX67"/>
<dbReference type="OpenTargets" id="ENSG00000166086"/>
<dbReference type="Orphanet" id="306547">
    <property type="disease" value="Porencephaly-microcephaly-bilateral congenital cataract syndrome"/>
</dbReference>
<dbReference type="PharmGKB" id="PA29993"/>
<dbReference type="VEuPathDB" id="HostDB:ENSG00000166086"/>
<dbReference type="eggNOG" id="ENOG502QTVP">
    <property type="taxonomic scope" value="Eukaryota"/>
</dbReference>
<dbReference type="GeneTree" id="ENSGT00940000156937"/>
<dbReference type="HOGENOM" id="CLU_067351_2_0_1"/>
<dbReference type="InParanoid" id="Q9BX67"/>
<dbReference type="OMA" id="ELSCIIM"/>
<dbReference type="OrthoDB" id="9942446at2759"/>
<dbReference type="PAN-GO" id="Q9BX67">
    <property type="GO annotations" value="7 GO annotations based on evolutionary models"/>
</dbReference>
<dbReference type="PhylomeDB" id="Q9BX67"/>
<dbReference type="TreeFam" id="TF331459"/>
<dbReference type="PathwayCommons" id="Q9BX67"/>
<dbReference type="Reactome" id="R-HSA-202733">
    <property type="pathway name" value="Cell surface interactions at the vascular wall"/>
</dbReference>
<dbReference type="Reactome" id="R-HSA-216083">
    <property type="pathway name" value="Integrin cell surface interactions"/>
</dbReference>
<dbReference type="SignaLink" id="Q9BX67"/>
<dbReference type="BioGRID-ORCS" id="83700">
    <property type="hits" value="9 hits in 1154 CRISPR screens"/>
</dbReference>
<dbReference type="ChiTaRS" id="JAM3">
    <property type="organism name" value="human"/>
</dbReference>
<dbReference type="GeneWiki" id="JAM3"/>
<dbReference type="GenomeRNAi" id="83700"/>
<dbReference type="Pharos" id="Q9BX67">
    <property type="development level" value="Tbio"/>
</dbReference>
<dbReference type="PRO" id="PR:Q9BX67"/>
<dbReference type="Proteomes" id="UP000005640">
    <property type="component" value="Chromosome 11"/>
</dbReference>
<dbReference type="RNAct" id="Q9BX67">
    <property type="molecule type" value="protein"/>
</dbReference>
<dbReference type="Bgee" id="ENSG00000166086">
    <property type="expression patterns" value="Expressed in corpus callosum and 209 other cell types or tissues"/>
</dbReference>
<dbReference type="ExpressionAtlas" id="Q9BX67">
    <property type="expression patterns" value="baseline and differential"/>
</dbReference>
<dbReference type="GO" id="GO:0005923">
    <property type="term" value="C:bicellular tight junction"/>
    <property type="evidence" value="ECO:0007669"/>
    <property type="project" value="UniProtKB-SubCell"/>
</dbReference>
<dbReference type="GO" id="GO:0044291">
    <property type="term" value="C:cell-cell contact zone"/>
    <property type="evidence" value="ECO:0000314"/>
    <property type="project" value="UniProtKB"/>
</dbReference>
<dbReference type="GO" id="GO:0005911">
    <property type="term" value="C:cell-cell junction"/>
    <property type="evidence" value="ECO:0000315"/>
    <property type="project" value="ARUK-UCL"/>
</dbReference>
<dbReference type="GO" id="GO:0030057">
    <property type="term" value="C:desmosome"/>
    <property type="evidence" value="ECO:0000314"/>
    <property type="project" value="UniProtKB"/>
</dbReference>
<dbReference type="GO" id="GO:0005615">
    <property type="term" value="C:extracellular space"/>
    <property type="evidence" value="ECO:0000314"/>
    <property type="project" value="UniProtKB"/>
</dbReference>
<dbReference type="GO" id="GO:0031941">
    <property type="term" value="C:filamentous actin"/>
    <property type="evidence" value="ECO:0000314"/>
    <property type="project" value="ARUK-UCL"/>
</dbReference>
<dbReference type="GO" id="GO:0005794">
    <property type="term" value="C:Golgi apparatus"/>
    <property type="evidence" value="ECO:0000314"/>
    <property type="project" value="HPA"/>
</dbReference>
<dbReference type="GO" id="GO:0005902">
    <property type="term" value="C:microvillus"/>
    <property type="evidence" value="ECO:0000314"/>
    <property type="project" value="ARUK-UCL"/>
</dbReference>
<dbReference type="GO" id="GO:0033010">
    <property type="term" value="C:paranodal junction"/>
    <property type="evidence" value="ECO:0007669"/>
    <property type="project" value="Ensembl"/>
</dbReference>
<dbReference type="GO" id="GO:0005886">
    <property type="term" value="C:plasma membrane"/>
    <property type="evidence" value="ECO:0000314"/>
    <property type="project" value="UniProtKB"/>
</dbReference>
<dbReference type="GO" id="GO:0098636">
    <property type="term" value="C:protein complex involved in cell adhesion"/>
    <property type="evidence" value="ECO:0000314"/>
    <property type="project" value="UniProtKB"/>
</dbReference>
<dbReference type="GO" id="GO:0043220">
    <property type="term" value="C:Schmidt-Lanterman incisure"/>
    <property type="evidence" value="ECO:0007669"/>
    <property type="project" value="Ensembl"/>
</dbReference>
<dbReference type="GO" id="GO:0070160">
    <property type="term" value="C:tight junction"/>
    <property type="evidence" value="ECO:0000314"/>
    <property type="project" value="ARUK-UCL"/>
</dbReference>
<dbReference type="GO" id="GO:0098632">
    <property type="term" value="F:cell-cell adhesion mediator activity"/>
    <property type="evidence" value="ECO:0000314"/>
    <property type="project" value="ARUK-UCL"/>
</dbReference>
<dbReference type="GO" id="GO:0005178">
    <property type="term" value="F:integrin binding"/>
    <property type="evidence" value="ECO:0000353"/>
    <property type="project" value="UniProtKB"/>
</dbReference>
<dbReference type="GO" id="GO:0046982">
    <property type="term" value="F:protein heterodimerization activity"/>
    <property type="evidence" value="ECO:0007669"/>
    <property type="project" value="InterPro"/>
</dbReference>
<dbReference type="GO" id="GO:0042803">
    <property type="term" value="F:protein homodimerization activity"/>
    <property type="evidence" value="ECO:0007669"/>
    <property type="project" value="InterPro"/>
</dbReference>
<dbReference type="GO" id="GO:0002250">
    <property type="term" value="P:adaptive immune response"/>
    <property type="evidence" value="ECO:0007669"/>
    <property type="project" value="Ensembl"/>
</dbReference>
<dbReference type="GO" id="GO:0034333">
    <property type="term" value="P:adherens junction assembly"/>
    <property type="evidence" value="ECO:0000315"/>
    <property type="project" value="ARUK-UCL"/>
</dbReference>
<dbReference type="GO" id="GO:0001525">
    <property type="term" value="P:angiogenesis"/>
    <property type="evidence" value="ECO:0000314"/>
    <property type="project" value="UniProtKB"/>
</dbReference>
<dbReference type="GO" id="GO:0045176">
    <property type="term" value="P:apical protein localization"/>
    <property type="evidence" value="ECO:0000315"/>
    <property type="project" value="ARUK-UCL"/>
</dbReference>
<dbReference type="GO" id="GO:0016477">
    <property type="term" value="P:cell migration"/>
    <property type="evidence" value="ECO:0000318"/>
    <property type="project" value="GO_Central"/>
</dbReference>
<dbReference type="GO" id="GO:0098609">
    <property type="term" value="P:cell-cell adhesion"/>
    <property type="evidence" value="ECO:0000314"/>
    <property type="project" value="ARUK-UCL"/>
</dbReference>
<dbReference type="GO" id="GO:0007160">
    <property type="term" value="P:cell-matrix adhesion"/>
    <property type="evidence" value="ECO:0007669"/>
    <property type="project" value="Ensembl"/>
</dbReference>
<dbReference type="GO" id="GO:0030010">
    <property type="term" value="P:establishment of cell polarity"/>
    <property type="evidence" value="ECO:0007669"/>
    <property type="project" value="Ensembl"/>
</dbReference>
<dbReference type="GO" id="GO:0097530">
    <property type="term" value="P:granulocyte migration"/>
    <property type="evidence" value="ECO:0000315"/>
    <property type="project" value="ARUK-UCL"/>
</dbReference>
<dbReference type="GO" id="GO:0097241">
    <property type="term" value="P:hematopoietic stem cell migration to bone marrow"/>
    <property type="evidence" value="ECO:0000315"/>
    <property type="project" value="UniProtKB"/>
</dbReference>
<dbReference type="GO" id="GO:0034113">
    <property type="term" value="P:heterotypic cell-cell adhesion"/>
    <property type="evidence" value="ECO:0000314"/>
    <property type="project" value="ARUK-UCL"/>
</dbReference>
<dbReference type="GO" id="GO:0002523">
    <property type="term" value="P:leukocyte migration involved in inflammatory response"/>
    <property type="evidence" value="ECO:0007669"/>
    <property type="project" value="Ensembl"/>
</dbReference>
<dbReference type="GO" id="GO:0035633">
    <property type="term" value="P:maintenance of blood-brain barrier"/>
    <property type="evidence" value="ECO:0000303"/>
    <property type="project" value="ARUK-UCL"/>
</dbReference>
<dbReference type="GO" id="GO:0042552">
    <property type="term" value="P:myelination"/>
    <property type="evidence" value="ECO:0007669"/>
    <property type="project" value="Ensembl"/>
</dbReference>
<dbReference type="GO" id="GO:0002318">
    <property type="term" value="P:myeloid progenitor cell differentiation"/>
    <property type="evidence" value="ECO:0007669"/>
    <property type="project" value="Ensembl"/>
</dbReference>
<dbReference type="GO" id="GO:0033629">
    <property type="term" value="P:negative regulation of cell adhesion mediated by integrin"/>
    <property type="evidence" value="ECO:0000315"/>
    <property type="project" value="ARUK-UCL"/>
</dbReference>
<dbReference type="GO" id="GO:0033624">
    <property type="term" value="P:negative regulation of integrin activation"/>
    <property type="evidence" value="ECO:0000315"/>
    <property type="project" value="ARUK-UCL"/>
</dbReference>
<dbReference type="GO" id="GO:0001780">
    <property type="term" value="P:neutrophil homeostasis"/>
    <property type="evidence" value="ECO:0007669"/>
    <property type="project" value="Ensembl"/>
</dbReference>
<dbReference type="GO" id="GO:1905710">
    <property type="term" value="P:positive regulation of membrane permeability"/>
    <property type="evidence" value="ECO:0000315"/>
    <property type="project" value="ARUK-UCL"/>
</dbReference>
<dbReference type="GO" id="GO:2000439">
    <property type="term" value="P:positive regulation of monocyte extravasation"/>
    <property type="evidence" value="ECO:0000315"/>
    <property type="project" value="ARUK-UCL"/>
</dbReference>
<dbReference type="GO" id="GO:1902414">
    <property type="term" value="P:protein localization to cell junction"/>
    <property type="evidence" value="ECO:0000315"/>
    <property type="project" value="ARUK-UCL"/>
</dbReference>
<dbReference type="GO" id="GO:0034394">
    <property type="term" value="P:protein localization to cell surface"/>
    <property type="evidence" value="ECO:0000315"/>
    <property type="project" value="ARUK-UCL"/>
</dbReference>
<dbReference type="GO" id="GO:0090138">
    <property type="term" value="P:regulation of actin cytoskeleton organization by cell-cell adhesion"/>
    <property type="evidence" value="ECO:0007669"/>
    <property type="project" value="Ensembl"/>
</dbReference>
<dbReference type="GO" id="GO:0090022">
    <property type="term" value="P:regulation of neutrophil chemotaxis"/>
    <property type="evidence" value="ECO:0000314"/>
    <property type="project" value="UniProtKB"/>
</dbReference>
<dbReference type="GO" id="GO:0007286">
    <property type="term" value="P:spermatid development"/>
    <property type="evidence" value="ECO:0007669"/>
    <property type="project" value="Ensembl"/>
</dbReference>
<dbReference type="GO" id="GO:0019226">
    <property type="term" value="P:transmission of nerve impulse"/>
    <property type="evidence" value="ECO:0007669"/>
    <property type="project" value="Ensembl"/>
</dbReference>
<dbReference type="CDD" id="cd20946">
    <property type="entry name" value="IgV_1_JAM1-like"/>
    <property type="match status" value="1"/>
</dbReference>
<dbReference type="FunFam" id="2.60.40.10:FF:000342">
    <property type="entry name" value="Junctional adhesion molecule A"/>
    <property type="match status" value="1"/>
</dbReference>
<dbReference type="FunFam" id="2.60.40.10:FF:000766">
    <property type="entry name" value="junctional adhesion molecule C"/>
    <property type="match status" value="1"/>
</dbReference>
<dbReference type="Gene3D" id="2.60.40.10">
    <property type="entry name" value="Immunoglobulins"/>
    <property type="match status" value="2"/>
</dbReference>
<dbReference type="InterPro" id="IPR007110">
    <property type="entry name" value="Ig-like_dom"/>
</dbReference>
<dbReference type="InterPro" id="IPR036179">
    <property type="entry name" value="Ig-like_dom_sf"/>
</dbReference>
<dbReference type="InterPro" id="IPR013783">
    <property type="entry name" value="Ig-like_fold"/>
</dbReference>
<dbReference type="InterPro" id="IPR003599">
    <property type="entry name" value="Ig_sub"/>
</dbReference>
<dbReference type="InterPro" id="IPR003598">
    <property type="entry name" value="Ig_sub2"/>
</dbReference>
<dbReference type="InterPro" id="IPR013106">
    <property type="entry name" value="Ig_V-set"/>
</dbReference>
<dbReference type="InterPro" id="IPR042974">
    <property type="entry name" value="JAM-C"/>
</dbReference>
<dbReference type="PANTHER" id="PTHR44598">
    <property type="entry name" value="JUNCTIONAL ADHESION MOLECULE C"/>
    <property type="match status" value="1"/>
</dbReference>
<dbReference type="PANTHER" id="PTHR44598:SF2">
    <property type="entry name" value="JUNCTIONAL ADHESION MOLECULE C"/>
    <property type="match status" value="1"/>
</dbReference>
<dbReference type="Pfam" id="PF13927">
    <property type="entry name" value="Ig_3"/>
    <property type="match status" value="1"/>
</dbReference>
<dbReference type="Pfam" id="PF07686">
    <property type="entry name" value="V-set"/>
    <property type="match status" value="1"/>
</dbReference>
<dbReference type="SMART" id="SM00409">
    <property type="entry name" value="IG"/>
    <property type="match status" value="2"/>
</dbReference>
<dbReference type="SMART" id="SM00408">
    <property type="entry name" value="IGc2"/>
    <property type="match status" value="2"/>
</dbReference>
<dbReference type="SMART" id="SM00406">
    <property type="entry name" value="IGv"/>
    <property type="match status" value="1"/>
</dbReference>
<dbReference type="SUPFAM" id="SSF48726">
    <property type="entry name" value="Immunoglobulin"/>
    <property type="match status" value="2"/>
</dbReference>
<dbReference type="PROSITE" id="PS50835">
    <property type="entry name" value="IG_LIKE"/>
    <property type="match status" value="2"/>
</dbReference>
<name>JAM3_HUMAN</name>
<keyword id="KW-0025">Alternative splicing</keyword>
<keyword id="KW-0037">Angiogenesis</keyword>
<keyword id="KW-0130">Cell adhesion</keyword>
<keyword id="KW-0965">Cell junction</keyword>
<keyword id="KW-1003">Cell membrane</keyword>
<keyword id="KW-0221">Differentiation</keyword>
<keyword id="KW-0903">Direct protein sequencing</keyword>
<keyword id="KW-0225">Disease variant</keyword>
<keyword id="KW-1015">Disulfide bond</keyword>
<keyword id="KW-0325">Glycoprotein</keyword>
<keyword id="KW-0393">Immunoglobulin domain</keyword>
<keyword id="KW-0449">Lipoprotein</keyword>
<keyword id="KW-0472">Membrane</keyword>
<keyword id="KW-0564">Palmitate</keyword>
<keyword id="KW-1267">Proteomics identification</keyword>
<keyword id="KW-1185">Reference proteome</keyword>
<keyword id="KW-0964">Secreted</keyword>
<keyword id="KW-0732">Signal</keyword>
<keyword id="KW-0744">Spermatogenesis</keyword>
<keyword id="KW-0796">Tight junction</keyword>
<keyword id="KW-0812">Transmembrane</keyword>
<keyword id="KW-1133">Transmembrane helix</keyword>
<reference key="1">
    <citation type="journal article" date="2001" name="J. Biol. Chem.">
        <title>Cloning of human junctional adhesion molecule 3 (JAM3) and its identification as the JAM2 counter-receptor.</title>
        <authorList>
            <person name="Arrate M.P."/>
            <person name="Rodriguez J.M."/>
            <person name="Tran T.M."/>
            <person name="Brock T.A."/>
            <person name="Cunningham S.A."/>
        </authorList>
    </citation>
    <scope>NUCLEOTIDE SEQUENCE [MRNA] (ISOFORM 1)</scope>
    <scope>FUNCTION</scope>
    <scope>SUBCELLULAR LOCATION</scope>
    <scope>TOPOLOGY</scope>
    <scope>TISSUE SPECIFICITY</scope>
    <source>
        <tissue>Brain</tissue>
    </source>
</reference>
<reference key="2">
    <citation type="journal article" date="2001" name="Blood">
        <title>Heterogeneity of endothelial junctions is reflected by differential expression and specific subcellular localization of the three JAM family members.</title>
        <authorList>
            <person name="Aurrand-Lions M.A."/>
            <person name="Johnson-Leger C."/>
            <person name="Wong C."/>
            <person name="Du Pasquier L."/>
            <person name="Imhof B.A."/>
        </authorList>
    </citation>
    <scope>NUCLEOTIDE SEQUENCE [MRNA] (ISOFORM 1)</scope>
</reference>
<reference key="3">
    <citation type="journal article" date="2002" name="J. Exp. Med.">
        <title>The junctional adhesion molecule 3 (JAM-3) on human platelets is a counterreceptor for the leukocyte integrin Mac-1.</title>
        <authorList>
            <person name="Santoso S."/>
            <person name="Sachs U.J.H."/>
            <person name="Kroll H."/>
            <person name="Linder M."/>
            <person name="Ruf A."/>
            <person name="Preissner K.T."/>
            <person name="Chavakis T."/>
        </authorList>
    </citation>
    <scope>NUCLEOTIDE SEQUENCE [MRNA] (ISOFORM 1)</scope>
    <scope>FUNCTION</scope>
    <scope>SUBCELLULAR LOCATION</scope>
    <scope>TISSUE SPECIFICITY</scope>
    <scope>INTERACTION WITH ITGAM</scope>
</reference>
<reference key="4">
    <citation type="journal article" date="2002" name="Genomics">
        <title>Narrowing the critical region within 11q24-qter for hypoplastic left heart and identification of a candidate gene, JAM3, expressed during cardiogenesis.</title>
        <authorList>
            <person name="Phillips H.M."/>
            <person name="Renforth G.L."/>
            <person name="Spalluto C."/>
            <person name="Hearn T."/>
            <person name="Curtis A.R.J."/>
            <person name="Craven L."/>
            <person name="Havarani B."/>
            <person name="Clement-Jones M."/>
            <person name="English C."/>
            <person name="Stumper O."/>
            <person name="Salmon T."/>
            <person name="Hutchinson S."/>
            <person name="Jackson M.S."/>
            <person name="Wilson D.I."/>
        </authorList>
    </citation>
    <scope>NUCLEOTIDE SEQUENCE [MRNA] (ISOFORM 1)</scope>
    <scope>TISSUE SPECIFICITY</scope>
</reference>
<reference key="5">
    <citation type="journal article" date="2004" name="Nat. Genet.">
        <title>Complete sequencing and characterization of 21,243 full-length human cDNAs.</title>
        <authorList>
            <person name="Ota T."/>
            <person name="Suzuki Y."/>
            <person name="Nishikawa T."/>
            <person name="Otsuki T."/>
            <person name="Sugiyama T."/>
            <person name="Irie R."/>
            <person name="Wakamatsu A."/>
            <person name="Hayashi K."/>
            <person name="Sato H."/>
            <person name="Nagai K."/>
            <person name="Kimura K."/>
            <person name="Makita H."/>
            <person name="Sekine M."/>
            <person name="Obayashi M."/>
            <person name="Nishi T."/>
            <person name="Shibahara T."/>
            <person name="Tanaka T."/>
            <person name="Ishii S."/>
            <person name="Yamamoto J."/>
            <person name="Saito K."/>
            <person name="Kawai Y."/>
            <person name="Isono Y."/>
            <person name="Nakamura Y."/>
            <person name="Nagahari K."/>
            <person name="Murakami K."/>
            <person name="Yasuda T."/>
            <person name="Iwayanagi T."/>
            <person name="Wagatsuma M."/>
            <person name="Shiratori A."/>
            <person name="Sudo H."/>
            <person name="Hosoiri T."/>
            <person name="Kaku Y."/>
            <person name="Kodaira H."/>
            <person name="Kondo H."/>
            <person name="Sugawara M."/>
            <person name="Takahashi M."/>
            <person name="Kanda K."/>
            <person name="Yokoi T."/>
            <person name="Furuya T."/>
            <person name="Kikkawa E."/>
            <person name="Omura Y."/>
            <person name="Abe K."/>
            <person name="Kamihara K."/>
            <person name="Katsuta N."/>
            <person name="Sato K."/>
            <person name="Tanikawa M."/>
            <person name="Yamazaki M."/>
            <person name="Ninomiya K."/>
            <person name="Ishibashi T."/>
            <person name="Yamashita H."/>
            <person name="Murakawa K."/>
            <person name="Fujimori K."/>
            <person name="Tanai H."/>
            <person name="Kimata M."/>
            <person name="Watanabe M."/>
            <person name="Hiraoka S."/>
            <person name="Chiba Y."/>
            <person name="Ishida S."/>
            <person name="Ono Y."/>
            <person name="Takiguchi S."/>
            <person name="Watanabe S."/>
            <person name="Yosida M."/>
            <person name="Hotuta T."/>
            <person name="Kusano J."/>
            <person name="Kanehori K."/>
            <person name="Takahashi-Fujii A."/>
            <person name="Hara H."/>
            <person name="Tanase T.-O."/>
            <person name="Nomura Y."/>
            <person name="Togiya S."/>
            <person name="Komai F."/>
            <person name="Hara R."/>
            <person name="Takeuchi K."/>
            <person name="Arita M."/>
            <person name="Imose N."/>
            <person name="Musashino K."/>
            <person name="Yuuki H."/>
            <person name="Oshima A."/>
            <person name="Sasaki N."/>
            <person name="Aotsuka S."/>
            <person name="Yoshikawa Y."/>
            <person name="Matsunawa H."/>
            <person name="Ichihara T."/>
            <person name="Shiohata N."/>
            <person name="Sano S."/>
            <person name="Moriya S."/>
            <person name="Momiyama H."/>
            <person name="Satoh N."/>
            <person name="Takami S."/>
            <person name="Terashima Y."/>
            <person name="Suzuki O."/>
            <person name="Nakagawa S."/>
            <person name="Senoh A."/>
            <person name="Mizoguchi H."/>
            <person name="Goto Y."/>
            <person name="Shimizu F."/>
            <person name="Wakebe H."/>
            <person name="Hishigaki H."/>
            <person name="Watanabe T."/>
            <person name="Sugiyama A."/>
            <person name="Takemoto M."/>
            <person name="Kawakami B."/>
            <person name="Yamazaki M."/>
            <person name="Watanabe K."/>
            <person name="Kumagai A."/>
            <person name="Itakura S."/>
            <person name="Fukuzumi Y."/>
            <person name="Fujimori Y."/>
            <person name="Komiyama M."/>
            <person name="Tashiro H."/>
            <person name="Tanigami A."/>
            <person name="Fujiwara T."/>
            <person name="Ono T."/>
            <person name="Yamada K."/>
            <person name="Fujii Y."/>
            <person name="Ozaki K."/>
            <person name="Hirao M."/>
            <person name="Ohmori Y."/>
            <person name="Kawabata A."/>
            <person name="Hikiji T."/>
            <person name="Kobatake N."/>
            <person name="Inagaki H."/>
            <person name="Ikema Y."/>
            <person name="Okamoto S."/>
            <person name="Okitani R."/>
            <person name="Kawakami T."/>
            <person name="Noguchi S."/>
            <person name="Itoh T."/>
            <person name="Shigeta K."/>
            <person name="Senba T."/>
            <person name="Matsumura K."/>
            <person name="Nakajima Y."/>
            <person name="Mizuno T."/>
            <person name="Morinaga M."/>
            <person name="Sasaki M."/>
            <person name="Togashi T."/>
            <person name="Oyama M."/>
            <person name="Hata H."/>
            <person name="Watanabe M."/>
            <person name="Komatsu T."/>
            <person name="Mizushima-Sugano J."/>
            <person name="Satoh T."/>
            <person name="Shirai Y."/>
            <person name="Takahashi Y."/>
            <person name="Nakagawa K."/>
            <person name="Okumura K."/>
            <person name="Nagase T."/>
            <person name="Nomura N."/>
            <person name="Kikuchi H."/>
            <person name="Masuho Y."/>
            <person name="Yamashita R."/>
            <person name="Nakai K."/>
            <person name="Yada T."/>
            <person name="Nakamura Y."/>
            <person name="Ohara O."/>
            <person name="Isogai T."/>
            <person name="Sugano S."/>
        </authorList>
    </citation>
    <scope>NUCLEOTIDE SEQUENCE [LARGE SCALE MRNA] (ISOFORMS 1 AND 2)</scope>
    <source>
        <tissue>Thalamus</tissue>
    </source>
</reference>
<reference key="6">
    <citation type="journal article" date="2003" name="Genome Res.">
        <title>The secreted protein discovery initiative (SPDI), a large-scale effort to identify novel human secreted and transmembrane proteins: a bioinformatics assessment.</title>
        <authorList>
            <person name="Clark H.F."/>
            <person name="Gurney A.L."/>
            <person name="Abaya E."/>
            <person name="Baker K."/>
            <person name="Baldwin D.T."/>
            <person name="Brush J."/>
            <person name="Chen J."/>
            <person name="Chow B."/>
            <person name="Chui C."/>
            <person name="Crowley C."/>
            <person name="Currell B."/>
            <person name="Deuel B."/>
            <person name="Dowd P."/>
            <person name="Eaton D."/>
            <person name="Foster J.S."/>
            <person name="Grimaldi C."/>
            <person name="Gu Q."/>
            <person name="Hass P.E."/>
            <person name="Heldens S."/>
            <person name="Huang A."/>
            <person name="Kim H.S."/>
            <person name="Klimowski L."/>
            <person name="Jin Y."/>
            <person name="Johnson S."/>
            <person name="Lee J."/>
            <person name="Lewis L."/>
            <person name="Liao D."/>
            <person name="Mark M.R."/>
            <person name="Robbie E."/>
            <person name="Sanchez C."/>
            <person name="Schoenfeld J."/>
            <person name="Seshagiri S."/>
            <person name="Simmons L."/>
            <person name="Singh J."/>
            <person name="Smith V."/>
            <person name="Stinson J."/>
            <person name="Vagts A."/>
            <person name="Vandlen R.L."/>
            <person name="Watanabe C."/>
            <person name="Wieand D."/>
            <person name="Woods K."/>
            <person name="Xie M.-H."/>
            <person name="Yansura D.G."/>
            <person name="Yi S."/>
            <person name="Yu G."/>
            <person name="Yuan J."/>
            <person name="Zhang M."/>
            <person name="Zhang Z."/>
            <person name="Goddard A.D."/>
            <person name="Wood W.I."/>
            <person name="Godowski P.J."/>
            <person name="Gray A.M."/>
        </authorList>
    </citation>
    <scope>NUCLEOTIDE SEQUENCE [LARGE SCALE MRNA] (ISOFORM 1)</scope>
</reference>
<reference key="7">
    <citation type="journal article" date="2006" name="Nature">
        <title>Human chromosome 11 DNA sequence and analysis including novel gene identification.</title>
        <authorList>
            <person name="Taylor T.D."/>
            <person name="Noguchi H."/>
            <person name="Totoki Y."/>
            <person name="Toyoda A."/>
            <person name="Kuroki Y."/>
            <person name="Dewar K."/>
            <person name="Lloyd C."/>
            <person name="Itoh T."/>
            <person name="Takeda T."/>
            <person name="Kim D.-W."/>
            <person name="She X."/>
            <person name="Barlow K.F."/>
            <person name="Bloom T."/>
            <person name="Bruford E."/>
            <person name="Chang J.L."/>
            <person name="Cuomo C.A."/>
            <person name="Eichler E."/>
            <person name="FitzGerald M.G."/>
            <person name="Jaffe D.B."/>
            <person name="LaButti K."/>
            <person name="Nicol R."/>
            <person name="Park H.-S."/>
            <person name="Seaman C."/>
            <person name="Sougnez C."/>
            <person name="Yang X."/>
            <person name="Zimmer A.R."/>
            <person name="Zody M.C."/>
            <person name="Birren B.W."/>
            <person name="Nusbaum C."/>
            <person name="Fujiyama A."/>
            <person name="Hattori M."/>
            <person name="Rogers J."/>
            <person name="Lander E.S."/>
            <person name="Sakaki Y."/>
        </authorList>
    </citation>
    <scope>NUCLEOTIDE SEQUENCE [LARGE SCALE GENOMIC DNA]</scope>
</reference>
<reference key="8">
    <citation type="submission" date="2005-07" db="EMBL/GenBank/DDBJ databases">
        <authorList>
            <person name="Mural R.J."/>
            <person name="Istrail S."/>
            <person name="Sutton G."/>
            <person name="Florea L."/>
            <person name="Halpern A.L."/>
            <person name="Mobarry C.M."/>
            <person name="Lippert R."/>
            <person name="Walenz B."/>
            <person name="Shatkay H."/>
            <person name="Dew I."/>
            <person name="Miller J.R."/>
            <person name="Flanigan M.J."/>
            <person name="Edwards N.J."/>
            <person name="Bolanos R."/>
            <person name="Fasulo D."/>
            <person name="Halldorsson B.V."/>
            <person name="Hannenhalli S."/>
            <person name="Turner R."/>
            <person name="Yooseph S."/>
            <person name="Lu F."/>
            <person name="Nusskern D.R."/>
            <person name="Shue B.C."/>
            <person name="Zheng X.H."/>
            <person name="Zhong F."/>
            <person name="Delcher A.L."/>
            <person name="Huson D.H."/>
            <person name="Kravitz S.A."/>
            <person name="Mouchard L."/>
            <person name="Reinert K."/>
            <person name="Remington K.A."/>
            <person name="Clark A.G."/>
            <person name="Waterman M.S."/>
            <person name="Eichler E.E."/>
            <person name="Adams M.D."/>
            <person name="Hunkapiller M.W."/>
            <person name="Myers E.W."/>
            <person name="Venter J.C."/>
        </authorList>
    </citation>
    <scope>NUCLEOTIDE SEQUENCE [LARGE SCALE GENOMIC DNA]</scope>
</reference>
<reference key="9">
    <citation type="journal article" date="2004" name="Genome Res.">
        <title>The status, quality, and expansion of the NIH full-length cDNA project: the Mammalian Gene Collection (MGC).</title>
        <authorList>
            <consortium name="The MGC Project Team"/>
        </authorList>
    </citation>
    <scope>NUCLEOTIDE SEQUENCE [LARGE SCALE MRNA] (ISOFORM 1)</scope>
    <source>
        <tissue>Eye</tissue>
        <tissue>Uterus</tissue>
    </source>
</reference>
<reference key="10">
    <citation type="journal article" date="2004" name="Protein Sci.">
        <title>Signal peptide prediction based on analysis of experimentally verified cleavage sites.</title>
        <authorList>
            <person name="Zhang Z."/>
            <person name="Henzel W.J."/>
        </authorList>
    </citation>
    <scope>PROTEIN SEQUENCE OF 32-46</scope>
</reference>
<reference key="11">
    <citation type="journal article" date="2002" name="J. Immunol.">
        <title>Vascular endothelial-junctional adhesion molecule (VE-JAM)/JAM 2 interacts with T, NK, and dendritic cells through JAM 3.</title>
        <authorList>
            <person name="Liang T.W."/>
            <person name="Chiu H.H."/>
            <person name="Gurney A."/>
            <person name="Sidle A."/>
            <person name="Tumas D.B."/>
            <person name="Schow P."/>
            <person name="Foster J."/>
            <person name="Klassen T."/>
            <person name="Dennis K."/>
            <person name="DeMarco R.A."/>
            <person name="Pham T."/>
            <person name="Frantz G."/>
            <person name="Fong S."/>
        </authorList>
    </citation>
    <scope>FUNCTION</scope>
</reference>
<reference key="12">
    <citation type="journal article" date="2003" name="Trends Immunol.">
        <title>Leukocyte-endothelial-cell interactions in leukocyte transmigration and the inflammatory response.</title>
        <authorList>
            <person name="Muller W.A."/>
        </authorList>
    </citation>
    <scope>REVIEW</scope>
    <scope>NOMENCLATURE</scope>
</reference>
<reference key="13">
    <citation type="journal article" date="2004" name="Mol. Biol. Cell">
        <title>JAM-C is a component of desmosomes and a ligand for CD11b/CD18-mediated neutrophil transepithelial migration.</title>
        <authorList>
            <person name="Zen K."/>
            <person name="Babbin B.A."/>
            <person name="Liu Y."/>
            <person name="Whelan J.B."/>
            <person name="Nusrat A."/>
            <person name="Parkos C.A."/>
        </authorList>
    </citation>
    <scope>FUNCTION IN NEUTROPHIL TRANSEPITHELIAL MIGRATION</scope>
    <scope>INTERACTION WITH ITGAM</scope>
    <scope>TISSUE SPECIFICITY</scope>
    <scope>SUBCELLULAR LOCATION</scope>
</reference>
<reference key="14">
    <citation type="journal article" date="2004" name="Nature">
        <title>Spermatid differentiation requires the assembly of a cell polarity complex downstream of junctional adhesion molecule-C.</title>
        <authorList>
            <person name="Gliki G."/>
            <person name="Ebnet K."/>
            <person name="Aurrand-Lions M."/>
            <person name="Imhof B.A."/>
            <person name="Adams R.H."/>
        </authorList>
    </citation>
    <scope>TISSUE SPECIFICITY</scope>
</reference>
<reference key="15">
    <citation type="journal article" date="2005" name="Cancer Res.">
        <title>Antibody against junctional adhesion molecule-C inhibits angiogenesis and tumor growth.</title>
        <authorList>
            <person name="Lamagna C."/>
            <person name="Hodivala-Dilke K.M."/>
            <person name="Imhof B.A."/>
            <person name="Aurrand-Lions M."/>
        </authorList>
    </citation>
    <scope>TISSUE SPECIFICITY</scope>
    <scope>SUBCELLULAR LOCATION</scope>
</reference>
<reference key="16">
    <citation type="journal article" date="2009" name="Nat. Biotechnol.">
        <title>Mass-spectrometric identification and relative quantification of N-linked cell surface glycoproteins.</title>
        <authorList>
            <person name="Wollscheid B."/>
            <person name="Bausch-Fluck D."/>
            <person name="Henderson C."/>
            <person name="O'Brien R."/>
            <person name="Bibel M."/>
            <person name="Schiess R."/>
            <person name="Aebersold R."/>
            <person name="Watts J.D."/>
        </authorList>
    </citation>
    <scope>GLYCOSYLATION [LARGE SCALE ANALYSIS] AT ASN-192</scope>
    <source>
        <tissue>Leukemic T-cell</tissue>
    </source>
</reference>
<reference key="17">
    <citation type="journal article" date="2010" name="Am. J. Hum. Genet.">
        <title>A homozygous mutation in the tight-junction protein JAM3 causes hemorrhagic destruction of the brain, subependymal calcification, and congenital cataracts.</title>
        <authorList>
            <person name="Mochida G.H."/>
            <person name="Ganesh V.S."/>
            <person name="Felie J.M."/>
            <person name="Gleason D."/>
            <person name="Hill R.S."/>
            <person name="Clapham K.R."/>
            <person name="Rakiec D."/>
            <person name="Tan W.H."/>
            <person name="Akawi N."/>
            <person name="Al-Saffar M."/>
            <person name="Partlow J.N."/>
            <person name="Tinschert S."/>
            <person name="Barkovich A.J."/>
            <person name="Ali B."/>
            <person name="Al-Gazali L."/>
            <person name="Walsh C.A."/>
        </authorList>
    </citation>
    <scope>INVOLVEMENT IN HDBSCC</scope>
</reference>
<reference key="18">
    <citation type="journal article" date="2010" name="J. Immunol.">
        <title>Junctional adhesion molecule-C is a soluble mediator of angiogenesis.</title>
        <authorList>
            <person name="Rabquer B.J."/>
            <person name="Amin M.A."/>
            <person name="Teegala N."/>
            <person name="Shaheen M.K."/>
            <person name="Tsou P.S."/>
            <person name="Ruth J.H."/>
            <person name="Lesch C.A."/>
            <person name="Imhof B.A."/>
            <person name="Koch A.E."/>
        </authorList>
    </citation>
    <scope>FUNCTION IN ANGIOGENESIS (SOLUBLE FORM OF JAM-C)</scope>
    <scope>TISSUE SPECIFICITY</scope>
    <scope>SUBCELLULAR LOCATION (SOLUBLE FORM OF JAM-C)</scope>
    <scope>PROTEOLYTIC CLEAVAGE BY ADAM10 AND ADAM17</scope>
</reference>
<reference key="19">
    <citation type="journal article" date="2011" name="BMC Syst. Biol.">
        <title>Initial characterization of the human central proteome.</title>
        <authorList>
            <person name="Burkard T.R."/>
            <person name="Planyavsky M."/>
            <person name="Kaupe I."/>
            <person name="Breitwieser F.P."/>
            <person name="Buerckstuemmer T."/>
            <person name="Bennett K.L."/>
            <person name="Superti-Furga G."/>
            <person name="Colinge J."/>
        </authorList>
    </citation>
    <scope>IDENTIFICATION BY MASS SPECTROMETRY [LARGE SCALE ANALYSIS]</scope>
</reference>
<reference key="20">
    <citation type="journal article" date="2014" name="Stem Cells">
        <title>Function of Jam-B/Jam-C interaction in homing and mobilization of human and mouse hematopoietic stem and progenitor cells.</title>
        <authorList>
            <person name="Arcangeli M.L."/>
            <person name="Bardin F."/>
            <person name="Frontera V."/>
            <person name="Bidaut G."/>
            <person name="Obrados E."/>
            <person name="Adams R.H."/>
            <person name="Chabannon C."/>
            <person name="Aurrand-Lions M."/>
        </authorList>
    </citation>
    <scope>FUNCTION</scope>
</reference>
<reference key="21">
    <citation type="journal article" date="2017" name="J. Biol. Chem.">
        <title>S-Palmitoylation of Junctional Adhesion Molecule C Regulates Its Tight Junction Localization and Cell Migration.</title>
        <authorList>
            <person name="Aramsangtienchai P."/>
            <person name="Spiegelman N.A."/>
            <person name="Cao J."/>
            <person name="Lin H."/>
        </authorList>
    </citation>
    <scope>FUNCTION</scope>
    <scope>PALMITOYLATION AT CYS-264 AND CYS-265</scope>
    <scope>SUBCELLULAR LOCATION</scope>
    <scope>MUTAGENESIS OF CYS-264 AND CYS-265</scope>
</reference>
<reference key="22">
    <citation type="journal article" date="2013" name="Hum. Mutat.">
        <title>Delineation of the clinical, molecular and cellular aspects of novel JAM3 mutations underlying the autosomal recessive hemorrhagic destruction of the brain, subependymal calcification, and congenital cataracts.</title>
        <authorList>
            <person name="Akawi N.A."/>
            <person name="Canpolat F.E."/>
            <person name="White S.M."/>
            <person name="Quilis-Esquerra J."/>
            <person name="Morales Sanchez M."/>
            <person name="Gamundi M.J."/>
            <person name="Mochida G.H."/>
            <person name="Walsh C.A."/>
            <person name="Ali B.R."/>
            <person name="Al-Gazali L."/>
        </authorList>
    </citation>
    <scope>VARIANTS HDBSCC LYS-116 AND TYR-219</scope>
    <scope>CHARACTERIZATION OF VARIANT HDBSCC TYR-219</scope>
    <scope>FUNCTION</scope>
    <scope>SUBCELLULAR LOCATION</scope>
</reference>
<protein>
    <recommendedName>
        <fullName>Junctional adhesion molecule C</fullName>
        <shortName>JAM-C</shortName>
    </recommendedName>
    <alternativeName>
        <fullName>JAM-2</fullName>
    </alternativeName>
    <alternativeName>
        <fullName>Junctional adhesion molecule 3</fullName>
        <shortName>JAM-3</shortName>
    </alternativeName>
    <component>
        <recommendedName>
            <fullName evidence="20">Soluble form of JAM-C</fullName>
            <shortName evidence="20">sJAM-C</shortName>
        </recommendedName>
    </component>
</protein>
<evidence type="ECO:0000250" key="1">
    <source>
        <dbReference type="UniProtKB" id="A3KPA0"/>
    </source>
</evidence>
<evidence type="ECO:0000250" key="2">
    <source>
        <dbReference type="UniProtKB" id="Q9D8B7"/>
    </source>
</evidence>
<evidence type="ECO:0000255" key="3"/>
<evidence type="ECO:0000255" key="4">
    <source>
        <dbReference type="PROSITE-ProRule" id="PRU00114"/>
    </source>
</evidence>
<evidence type="ECO:0000269" key="5">
    <source>
    </source>
</evidence>
<evidence type="ECO:0000269" key="6">
    <source>
    </source>
</evidence>
<evidence type="ECO:0000269" key="7">
    <source>
    </source>
</evidence>
<evidence type="ECO:0000269" key="8">
    <source>
    </source>
</evidence>
<evidence type="ECO:0000269" key="9">
    <source>
    </source>
</evidence>
<evidence type="ECO:0000269" key="10">
    <source>
    </source>
</evidence>
<evidence type="ECO:0000269" key="11">
    <source>
    </source>
</evidence>
<evidence type="ECO:0000269" key="12">
    <source>
    </source>
</evidence>
<evidence type="ECO:0000269" key="13">
    <source>
    </source>
</evidence>
<evidence type="ECO:0000269" key="14">
    <source>
    </source>
</evidence>
<evidence type="ECO:0000269" key="15">
    <source>
    </source>
</evidence>
<evidence type="ECO:0000269" key="16">
    <source>
    </source>
</evidence>
<evidence type="ECO:0000269" key="17">
    <source>
    </source>
</evidence>
<evidence type="ECO:0000269" key="18">
    <source>
    </source>
</evidence>
<evidence type="ECO:0000303" key="19">
    <source>
    </source>
</evidence>
<evidence type="ECO:0000303" key="20">
    <source>
    </source>
</evidence>
<evidence type="ECO:0000305" key="21"/>
<evidence type="ECO:0000305" key="22">
    <source>
    </source>
</evidence>
<evidence type="ECO:0000305" key="23">
    <source>
    </source>
</evidence>
<comment type="function">
    <text evidence="1 2 5 6 8 9 16 17 23">Junctional adhesion protein that mediates heterotypic cell-cell interactions with its cognate receptor JAM2 to regulate different cellular processes (PubMed:11590146, PubMed:11823489). Plays a role in homing and mobilization of hematopoietic stem and progenitor cells within the bone marrow. At the surface of bone marrow stromal cells, it contributes to the retention of the hematopoietic stem and progenitor cells expressing JAM3 (PubMed:11590146, PubMed:24357068). Plays a central role in leukocytes extravasation by facilitating transmigration through the endothelium (By similarity). Plays a role in spermatogenesis where JAM2 and JAM3, which are respectively expressed by Sertoli and germ cells, mediate an interaction between both cell types and play an essential role in the anchorage of germ cells onto Sertoli cells and the assembly of cell polarity complexes during spermatid differentiation (By similarity). Also functions as a counter-receptor for ITGAM, mediating leukocyte-platelet interactions and is involved in the regulation of transepithelial migration of polymorphonuclear neutrophils (PMN) (PubMed:12208882, PubMed:15194813). Plays a role in angiogenesis (PubMed:23255084). Plays a role in the regulation of cell migration (Probable). During myogenesis, it is involved in myocyte fusion (By similarity).</text>
</comment>
<comment type="function">
    <molecule>Soluble form of JAM-C</molecule>
    <text evidence="14">Promotes chemotaxis of vascular endothelial cells and stimulates angiogenesis.</text>
</comment>
<comment type="subunit">
    <text evidence="2 5 8 9">Interacts with ITGAM (PubMed:12208882, PubMed:15194813). Interacts with GORASP2 (By similarity).</text>
</comment>
<comment type="interaction">
    <interactant intactId="EBI-4314733">
        <id>Q9BX67</id>
    </interactant>
    <interactant intactId="EBI-3918416">
        <id>P57087</id>
        <label>JAM2</label>
    </interactant>
    <organismsDiffer>false</organismsDiffer>
    <experiments>2</experiments>
</comment>
<comment type="interaction">
    <interactant intactId="EBI-4314733">
        <id>Q9BX67</id>
    </interactant>
    <interactant intactId="EBI-16439278">
        <id>Q6FHY5</id>
        <label>MEOX2</label>
    </interactant>
    <organismsDiffer>false</organismsDiffer>
    <experiments>3</experiments>
</comment>
<comment type="subcellular location">
    <subcellularLocation>
        <location evidence="5 8 12 16 18">Cell membrane</location>
        <topology evidence="22">Single-pass type I membrane protein</topology>
    </subcellularLocation>
    <subcellularLocation>
        <location evidence="12">Cell junction</location>
    </subcellularLocation>
    <subcellularLocation>
        <location evidence="9">Cell junction</location>
        <location evidence="9">Desmosome</location>
    </subcellularLocation>
    <subcellularLocation>
        <location evidence="18">Cell junction</location>
        <location evidence="18">Tight junction</location>
    </subcellularLocation>
    <text evidence="2">Detected in the acrosome region in developing spermatids (By similarity). In epithelial cells, it is expressed at desmosomes but not at tight junctions (PubMed:15194813). Localizes at the cell surface of endothelial cells; treatment of endothelial cells with vascular endothelial growth factor stimulates recruitment of JAM3 to cell-cell contacts (PubMed:15994945).</text>
</comment>
<comment type="subcellular location">
    <molecule>Soluble form of JAM-C</molecule>
    <subcellularLocation>
        <location evidence="14">Secreted</location>
    </subcellularLocation>
</comment>
<comment type="alternative products">
    <event type="alternative splicing"/>
    <isoform>
        <id>Q9BX67-1</id>
        <name>1</name>
        <sequence type="displayed"/>
    </isoform>
    <isoform>
        <id>Q9BX67-2</id>
        <name>2</name>
        <sequence type="described" ref="VSP_042561"/>
    </isoform>
</comment>
<comment type="tissue specificity">
    <text evidence="5 7 8 9 11 12 14">Detected on round and elongated spermatids (at protein level) (PubMed:15372036). Highest expression in placenta, brain and kidney. Significant expression is detected on platelets. Expressed in intestinal mucosa cells. Expressed in the vascular endothelium. Found in serum (at protein level). Also detected in the synovial fluid of patients with rheumatoid arthritis, psoriatic arthritis or ostearthritis (at protein level).</text>
</comment>
<comment type="domain">
    <text evidence="2">The Ig-like V-type domain mediates interaction with JAM2.</text>
</comment>
<comment type="PTM">
    <text evidence="14">Proteolytically cleaved from endothelial cells surface into a soluble form by ADAM10 and ADAM17; the release of soluble JAM3 is increased by pro-inflammatory factors.</text>
</comment>
<comment type="PTM">
    <text evidence="18">S-palmitoylated by ZDHHC7. S-palmitoylation promotes expression at tight junctions.</text>
</comment>
<comment type="disease" evidence="15 16">
    <disease id="DI-03021">
        <name>Hemorrhagic destruction of the brain with subependymal calcification and cataracts</name>
        <acronym>HDBSCC</acronym>
        <description>A syndrome characterized by congenital cataracts and severe brain abnormalities apparently resulting from hemorrhagic destruction of the brain parenchyma, including the cerebral white matter and basal ganglia. Patients manifest profound developmental delay, and other neurologic features included seizures, spasticity, and hyperreflexia. The clinical course is very severe resulting in death in infancy. Brain imaging shows multifocal intraparenchymal hemorrhage with associated liquefaction and massive cystic degeneration, and calcification in the subependymal region and in brain tissue.</description>
        <dbReference type="MIM" id="613730"/>
    </disease>
    <text>The disease is caused by variants affecting the gene represented in this entry.</text>
</comment>
<comment type="similarity">
    <text evidence="21">Belongs to the immunoglobulin superfamily.</text>
</comment>
<comment type="sequence caution" evidence="21">
    <conflict type="erroneous initiation">
        <sequence resource="EMBL-CDS" id="CAC94776"/>
    </conflict>
</comment>